<organism>
    <name type="scientific">Xenopus laevis</name>
    <name type="common">African clawed frog</name>
    <dbReference type="NCBI Taxonomy" id="8355"/>
    <lineage>
        <taxon>Eukaryota</taxon>
        <taxon>Metazoa</taxon>
        <taxon>Chordata</taxon>
        <taxon>Craniata</taxon>
        <taxon>Vertebrata</taxon>
        <taxon>Euteleostomi</taxon>
        <taxon>Amphibia</taxon>
        <taxon>Batrachia</taxon>
        <taxon>Anura</taxon>
        <taxon>Pipoidea</taxon>
        <taxon>Pipidae</taxon>
        <taxon>Xenopodinae</taxon>
        <taxon>Xenopus</taxon>
        <taxon>Xenopus</taxon>
    </lineage>
</organism>
<keyword id="KW-0117">Actin capping</keyword>
<keyword id="KW-0009">Actin-binding</keyword>
<keyword id="KW-0106">Calcium</keyword>
<keyword id="KW-0970">Cilium biogenesis/degradation</keyword>
<keyword id="KW-0963">Cytoplasm</keyword>
<keyword id="KW-0206">Cytoskeleton</keyword>
<keyword id="KW-0479">Metal-binding</keyword>
<keyword id="KW-1185">Reference proteome</keyword>
<keyword id="KW-0677">Repeat</keyword>
<dbReference type="EMBL" id="M36652">
    <property type="protein sequence ID" value="AAA49725.1"/>
    <property type="molecule type" value="mRNA"/>
</dbReference>
<dbReference type="EMBL" id="X13319">
    <property type="protein sequence ID" value="CAA31694.1"/>
    <property type="molecule type" value="mRNA"/>
</dbReference>
<dbReference type="PIR" id="A31142">
    <property type="entry name" value="A31142"/>
</dbReference>
<dbReference type="SMR" id="P14885"/>
<dbReference type="IntAct" id="P14885">
    <property type="interactions" value="1"/>
</dbReference>
<dbReference type="MINT" id="P14885"/>
<dbReference type="AGR" id="Xenbase:XB-GENE-865877"/>
<dbReference type="Xenbase" id="XB-GENE-865877">
    <property type="gene designation" value="gsn.S"/>
</dbReference>
<dbReference type="CD-CODE" id="78E86D56">
    <property type="entry name" value="Mitochondrial cloud"/>
</dbReference>
<dbReference type="Proteomes" id="UP000186698">
    <property type="component" value="Unplaced"/>
</dbReference>
<dbReference type="GO" id="GO:0015629">
    <property type="term" value="C:actin cytoskeleton"/>
    <property type="evidence" value="ECO:0000318"/>
    <property type="project" value="GO_Central"/>
</dbReference>
<dbReference type="GO" id="GO:0005737">
    <property type="term" value="C:cytoplasm"/>
    <property type="evidence" value="ECO:0000318"/>
    <property type="project" value="GO_Central"/>
</dbReference>
<dbReference type="GO" id="GO:0005615">
    <property type="term" value="C:extracellular space"/>
    <property type="evidence" value="ECO:0000318"/>
    <property type="project" value="GO_Central"/>
</dbReference>
<dbReference type="GO" id="GO:0051015">
    <property type="term" value="F:actin filament binding"/>
    <property type="evidence" value="ECO:0000318"/>
    <property type="project" value="GO_Central"/>
</dbReference>
<dbReference type="GO" id="GO:0046872">
    <property type="term" value="F:metal ion binding"/>
    <property type="evidence" value="ECO:0007669"/>
    <property type="project" value="UniProtKB-KW"/>
</dbReference>
<dbReference type="GO" id="GO:0005546">
    <property type="term" value="F:phosphatidylinositol-4,5-bisphosphate binding"/>
    <property type="evidence" value="ECO:0000318"/>
    <property type="project" value="GO_Central"/>
</dbReference>
<dbReference type="GO" id="GO:0051014">
    <property type="term" value="P:actin filament severing"/>
    <property type="evidence" value="ECO:0000318"/>
    <property type="project" value="GO_Central"/>
</dbReference>
<dbReference type="GO" id="GO:0008154">
    <property type="term" value="P:actin polymerization or depolymerization"/>
    <property type="evidence" value="ECO:0000318"/>
    <property type="project" value="GO_Central"/>
</dbReference>
<dbReference type="GO" id="GO:0051016">
    <property type="term" value="P:barbed-end actin filament capping"/>
    <property type="evidence" value="ECO:0000318"/>
    <property type="project" value="GO_Central"/>
</dbReference>
<dbReference type="GO" id="GO:0030031">
    <property type="term" value="P:cell projection assembly"/>
    <property type="evidence" value="ECO:0000318"/>
    <property type="project" value="GO_Central"/>
</dbReference>
<dbReference type="GO" id="GO:0007417">
    <property type="term" value="P:central nervous system development"/>
    <property type="evidence" value="ECO:0000318"/>
    <property type="project" value="GO_Central"/>
</dbReference>
<dbReference type="GO" id="GO:0060271">
    <property type="term" value="P:cilium assembly"/>
    <property type="evidence" value="ECO:0000250"/>
    <property type="project" value="UniProtKB"/>
</dbReference>
<dbReference type="CDD" id="cd11293">
    <property type="entry name" value="gelsolin_S4_like"/>
    <property type="match status" value="1"/>
</dbReference>
<dbReference type="CDD" id="cd11288">
    <property type="entry name" value="gelsolin_S5_like"/>
    <property type="match status" value="1"/>
</dbReference>
<dbReference type="CDD" id="cd11291">
    <property type="entry name" value="gelsolin_S6_like"/>
    <property type="match status" value="1"/>
</dbReference>
<dbReference type="FunFam" id="3.40.20.10:FF:000001">
    <property type="entry name" value="Gelsolin"/>
    <property type="match status" value="1"/>
</dbReference>
<dbReference type="FunFam" id="3.40.20.10:FF:000004">
    <property type="entry name" value="Gelsolin"/>
    <property type="match status" value="1"/>
</dbReference>
<dbReference type="FunFam" id="3.40.20.10:FF:000005">
    <property type="entry name" value="Gelsolin"/>
    <property type="match status" value="1"/>
</dbReference>
<dbReference type="Gene3D" id="3.40.20.10">
    <property type="entry name" value="Severin"/>
    <property type="match status" value="4"/>
</dbReference>
<dbReference type="InterPro" id="IPR029006">
    <property type="entry name" value="ADF-H/Gelsolin-like_dom_sf"/>
</dbReference>
<dbReference type="InterPro" id="IPR007123">
    <property type="entry name" value="Gelsolin-like_dom"/>
</dbReference>
<dbReference type="InterPro" id="IPR007122">
    <property type="entry name" value="Villin/Gelsolin"/>
</dbReference>
<dbReference type="PANTHER" id="PTHR11977:SF29">
    <property type="entry name" value="GELSOLIN"/>
    <property type="match status" value="1"/>
</dbReference>
<dbReference type="PANTHER" id="PTHR11977">
    <property type="entry name" value="VILLIN"/>
    <property type="match status" value="1"/>
</dbReference>
<dbReference type="Pfam" id="PF00626">
    <property type="entry name" value="Gelsolin"/>
    <property type="match status" value="3"/>
</dbReference>
<dbReference type="PRINTS" id="PR00597">
    <property type="entry name" value="GELSOLIN"/>
</dbReference>
<dbReference type="SMART" id="SM00262">
    <property type="entry name" value="GEL"/>
    <property type="match status" value="3"/>
</dbReference>
<dbReference type="SUPFAM" id="SSF55753">
    <property type="entry name" value="Actin depolymerizing proteins"/>
    <property type="match status" value="3"/>
</dbReference>
<protein>
    <recommendedName>
        <fullName>Gelsolin</fullName>
    </recommendedName>
    <alternativeName>
        <fullName>Actin-depolymerizing factor</fullName>
        <shortName>ADF</shortName>
    </alternativeName>
    <alternativeName>
        <fullName>Brevin</fullName>
    </alternativeName>
</protein>
<name>GELS_XENLA</name>
<evidence type="ECO:0000250" key="1"/>
<evidence type="ECO:0000250" key="2">
    <source>
        <dbReference type="UniProtKB" id="P06396"/>
    </source>
</evidence>
<evidence type="ECO:0000255" key="3"/>
<evidence type="ECO:0000305" key="4"/>
<gene>
    <name type="primary">gsn</name>
</gene>
<reference key="1">
    <citation type="journal article" date="1988" name="J. Cell Biol.">
        <title>Proteins regulating actin assembly in oogenesis and early embryogenesis of Xenopus laevis: gelsolin is the major cytoplasmic actin-binding protein.</title>
        <authorList>
            <person name="Ankenbauer T."/>
            <person name="Kleinschmidt J.A."/>
            <person name="Vandekerckhove J."/>
            <person name="Franke W.W."/>
        </authorList>
    </citation>
    <scope>NUCLEOTIDE SEQUENCE [MRNA]</scope>
    <source>
        <tissue>Ovary</tissue>
    </source>
</reference>
<proteinExistence type="evidence at transcript level"/>
<sequence>FISKMGYPKQTQVQVLPESGETPLFKQFFKNWRDKEATDGMGVAYVPNHIAKIENVPFDVTVLHESPAMAAQHGMVDDGSGKKQIWRIENCEKVPVLESHYGQFYGGDSYIILYHYKSGGKQGQIIYTWQGDDSTKDEITASAILSAQLDEELGGGPVQVRVVQGKEPAHLISLFGGKPMIIYKGGTSREGGQTKDANVRLFQVRTSSSGFSRAVEVDNTASNLNSNDAFVLTTPSASYLWVGQGSTNVEKNGAKELLKILGVSASEIPEGQETDDFWGALGGKADYRTSARLKDKLNAHPPRLFACSNKTGRFIIEEVPGEISQDDLATDDVMLLDTWDQVYVWVGNEAQEDEKKEAIASAYKYIESDPANRDKRTPVAITKQGFEPPTFIGWFLGWEADYWDVDPLERAMAGLSS</sequence>
<feature type="chain" id="PRO_0000218724" description="Gelsolin">
    <location>
        <begin position="1" status="less than"/>
        <end position="417"/>
    </location>
</feature>
<feature type="repeat" description="Gelsolin-like 4" evidence="3">
    <location>
        <begin position="93"/>
        <end position="171"/>
    </location>
</feature>
<feature type="repeat" description="Gelsolin-like 5" evidence="3">
    <location>
        <begin position="213"/>
        <end position="261"/>
    </location>
</feature>
<feature type="repeat" description="Gelsolin-like 6" evidence="3">
    <location>
        <begin position="316"/>
        <end position="392"/>
    </location>
</feature>
<feature type="binding site" evidence="2">
    <location>
        <position position="107"/>
    </location>
    <ligand>
        <name>Ca(2+)</name>
        <dbReference type="ChEBI" id="CHEBI:29108"/>
        <label>5</label>
        <note>type II</note>
    </ligand>
</feature>
<feature type="binding site" evidence="2">
    <location>
        <position position="108"/>
    </location>
    <ligand>
        <name>Ca(2+)</name>
        <dbReference type="ChEBI" id="CHEBI:29108"/>
        <label>5</label>
        <note>type II</note>
    </ligand>
</feature>
<feature type="binding site" evidence="2">
    <location>
        <position position="138"/>
    </location>
    <ligand>
        <name>Ca(2+)</name>
        <dbReference type="ChEBI" id="CHEBI:29108"/>
        <label>5</label>
        <note>type II</note>
    </ligand>
</feature>
<feature type="binding site" evidence="2">
    <location>
        <position position="150"/>
    </location>
    <ligand>
        <name>Ca(2+)</name>
        <dbReference type="ChEBI" id="CHEBI:29108"/>
        <label>6</label>
        <note>type I</note>
    </ligand>
</feature>
<feature type="binding site" evidence="2">
    <location>
        <position position="155"/>
    </location>
    <ligand>
        <name>Ca(2+)</name>
        <dbReference type="ChEBI" id="CHEBI:29108"/>
        <label>6</label>
        <note>type I</note>
    </ligand>
</feature>
<feature type="binding site" evidence="2">
    <location>
        <position position="157"/>
    </location>
    <ligand>
        <name>Ca(2+)</name>
        <dbReference type="ChEBI" id="CHEBI:29108"/>
        <label>6</label>
        <note>type I</note>
    </ligand>
</feature>
<feature type="binding site" evidence="2">
    <location>
        <position position="187"/>
    </location>
    <ligand>
        <name>Ca(2+)</name>
        <dbReference type="ChEBI" id="CHEBI:29108"/>
        <label>5</label>
        <note>type II</note>
    </ligand>
</feature>
<feature type="binding site" evidence="2">
    <location>
        <position position="227"/>
    </location>
    <ligand>
        <name>Ca(2+)</name>
        <dbReference type="ChEBI" id="CHEBI:29108"/>
        <label>7</label>
        <note>type II</note>
    </ligand>
</feature>
<feature type="binding site" evidence="2">
    <location>
        <position position="228"/>
    </location>
    <ligand>
        <name>Ca(2+)</name>
        <dbReference type="ChEBI" id="CHEBI:29108"/>
        <label>7</label>
        <note>type II</note>
    </ligand>
</feature>
<feature type="binding site" evidence="2">
    <location>
        <position position="250"/>
    </location>
    <ligand>
        <name>Ca(2+)</name>
        <dbReference type="ChEBI" id="CHEBI:29108"/>
        <label>7</label>
        <note>type II</note>
    </ligand>
</feature>
<feature type="binding site" evidence="2">
    <location>
        <position position="331"/>
    </location>
    <ligand>
        <name>Ca(2+)</name>
        <dbReference type="ChEBI" id="CHEBI:29108"/>
        <label>8</label>
        <note>type II</note>
    </ligand>
</feature>
<feature type="binding site" evidence="2">
    <location>
        <position position="332"/>
    </location>
    <ligand>
        <name>Ca(2+)</name>
        <dbReference type="ChEBI" id="CHEBI:29108"/>
        <label>8</label>
        <note>type II</note>
    </ligand>
</feature>
<feature type="binding site" evidence="2">
    <location>
        <position position="354"/>
    </location>
    <ligand>
        <name>Ca(2+)</name>
        <dbReference type="ChEBI" id="CHEBI:29108"/>
        <label>8</label>
        <note>type II</note>
    </ligand>
</feature>
<feature type="non-terminal residue">
    <location>
        <position position="1"/>
    </location>
</feature>
<comment type="function">
    <text evidence="2">Calcium-regulated, actin-modulating protein that binds to the plus (or barbed) ends of actin monomers or filaments, preventing monomer exchange (end-blocking or capping). It can promote the assembly of monomers into filaments (nucleation) as well as sever filaments already formed (By similarity). Plays a role in ciliogenesis (By similarity).</text>
</comment>
<comment type="subcellular location">
    <subcellularLocation>
        <location evidence="1">Cytoplasm</location>
        <location evidence="1">Cytoskeleton</location>
    </subcellularLocation>
    <text evidence="1">A cytoplasmic form may also exists.</text>
</comment>
<comment type="domain">
    <text evidence="2">Comprises six structurally related gelsolin-like (G1-G6) domains, that, in a calcium-free environment, are packed together to form a compact globular structure in which the putative actin-binding sequences are not sufficiently exposed to enable binding to occur. Binding calcium may release the connections that join the N- and C-terminal halves of gelsolin, enabling each half to bind actin relatively independently. G1 and G4 bind two Ca(2+) in a type I and in a type II manner. G2, G3, G5 and G6 bind only one Ca(2+) in a type II manner. Type I Ca(2+) binding sites are shared between actin and gelsolin-like repeats G1 and G4. Type I binding governs the strength of interactions between gelsolin and actin by direct participation at the binding interface. Ca(2+) binding to G2 and G6 disrupts the interactions between G2 and G6, releases the C-terminal tail, and induces large interdomain rearrangements that result in the exposure of the F-actin-binding site on G2 and contributes to the activation of gelsolin. Binding to phosphoinositides may inhibit the severing and capping properties of gelsolin.</text>
</comment>
<comment type="similarity">
    <text evidence="4">Belongs to the villin/gelsolin family.</text>
</comment>
<accession>P14885</accession>